<evidence type="ECO:0000255" key="1">
    <source>
        <dbReference type="HAMAP-Rule" id="MF_00015"/>
    </source>
</evidence>
<gene>
    <name evidence="1" type="primary">lexA</name>
    <name type="ordered locus">Rru_A1898</name>
</gene>
<sequence>MLTRKQYLLLSFIDQRLKLSGVSPSFDEMKDALGLKSKSGIHRLIKGLEERGFLKRLPHRARALEVLRLPCNLTFDGDGEALDDGQPAPLFGGPLPETGFSPQVIRGNFTPTLPSTQVPQVLFTESISLPLLGKIAAGTPIAALIDPTSSIDVPASMVRGGEHFALRIEGDSMIEAGILSGDLAVVRRCDEAENGTVIVALVDNEEATLKRLRRKGASIALEPANRAFKTQIYGPDRVRIQGRLVGLIRSY</sequence>
<keyword id="KW-0068">Autocatalytic cleavage</keyword>
<keyword id="KW-0227">DNA damage</keyword>
<keyword id="KW-0234">DNA repair</keyword>
<keyword id="KW-0235">DNA replication</keyword>
<keyword id="KW-0238">DNA-binding</keyword>
<keyword id="KW-0378">Hydrolase</keyword>
<keyword id="KW-1185">Reference proteome</keyword>
<keyword id="KW-0678">Repressor</keyword>
<keyword id="KW-0742">SOS response</keyword>
<keyword id="KW-0804">Transcription</keyword>
<keyword id="KW-0805">Transcription regulation</keyword>
<name>LEXA_RHORT</name>
<organism>
    <name type="scientific">Rhodospirillum rubrum (strain ATCC 11170 / ATH 1.1.1 / DSM 467 / LMG 4362 / NCIMB 8255 / S1)</name>
    <dbReference type="NCBI Taxonomy" id="269796"/>
    <lineage>
        <taxon>Bacteria</taxon>
        <taxon>Pseudomonadati</taxon>
        <taxon>Pseudomonadota</taxon>
        <taxon>Alphaproteobacteria</taxon>
        <taxon>Rhodospirillales</taxon>
        <taxon>Rhodospirillaceae</taxon>
        <taxon>Rhodospirillum</taxon>
    </lineage>
</organism>
<feature type="chain" id="PRO_0000322757" description="LexA repressor">
    <location>
        <begin position="1"/>
        <end position="251"/>
    </location>
</feature>
<feature type="DNA-binding region" description="H-T-H motif" evidence="1">
    <location>
        <begin position="26"/>
        <end position="46"/>
    </location>
</feature>
<feature type="active site" description="For autocatalytic cleavage activity" evidence="1">
    <location>
        <position position="172"/>
    </location>
</feature>
<feature type="active site" description="For autocatalytic cleavage activity" evidence="1">
    <location>
        <position position="210"/>
    </location>
</feature>
<feature type="site" description="Cleavage; by autolysis" evidence="1">
    <location>
        <begin position="137"/>
        <end position="138"/>
    </location>
</feature>
<dbReference type="EC" id="3.4.21.88" evidence="1"/>
<dbReference type="EMBL" id="CP000230">
    <property type="protein sequence ID" value="ABC22698.1"/>
    <property type="molecule type" value="Genomic_DNA"/>
</dbReference>
<dbReference type="RefSeq" id="WP_011389651.1">
    <property type="nucleotide sequence ID" value="NC_007643.1"/>
</dbReference>
<dbReference type="RefSeq" id="YP_426985.1">
    <property type="nucleotide sequence ID" value="NC_007643.1"/>
</dbReference>
<dbReference type="SMR" id="Q2RT47"/>
<dbReference type="STRING" id="269796.Rru_A1898"/>
<dbReference type="MEROPS" id="S24.001"/>
<dbReference type="EnsemblBacteria" id="ABC22698">
    <property type="protein sequence ID" value="ABC22698"/>
    <property type="gene ID" value="Rru_A1898"/>
</dbReference>
<dbReference type="KEGG" id="rru:Rru_A1898"/>
<dbReference type="PATRIC" id="fig|269796.9.peg.1979"/>
<dbReference type="eggNOG" id="COG1974">
    <property type="taxonomic scope" value="Bacteria"/>
</dbReference>
<dbReference type="HOGENOM" id="CLU_066192_45_2_5"/>
<dbReference type="PhylomeDB" id="Q2RT47"/>
<dbReference type="Proteomes" id="UP000001929">
    <property type="component" value="Chromosome"/>
</dbReference>
<dbReference type="GO" id="GO:0003677">
    <property type="term" value="F:DNA binding"/>
    <property type="evidence" value="ECO:0007669"/>
    <property type="project" value="UniProtKB-UniRule"/>
</dbReference>
<dbReference type="GO" id="GO:0004252">
    <property type="term" value="F:serine-type endopeptidase activity"/>
    <property type="evidence" value="ECO:0007669"/>
    <property type="project" value="UniProtKB-UniRule"/>
</dbReference>
<dbReference type="GO" id="GO:0006281">
    <property type="term" value="P:DNA repair"/>
    <property type="evidence" value="ECO:0007669"/>
    <property type="project" value="UniProtKB-UniRule"/>
</dbReference>
<dbReference type="GO" id="GO:0006260">
    <property type="term" value="P:DNA replication"/>
    <property type="evidence" value="ECO:0007669"/>
    <property type="project" value="UniProtKB-UniRule"/>
</dbReference>
<dbReference type="GO" id="GO:0045892">
    <property type="term" value="P:negative regulation of DNA-templated transcription"/>
    <property type="evidence" value="ECO:0007669"/>
    <property type="project" value="UniProtKB-UniRule"/>
</dbReference>
<dbReference type="GO" id="GO:0006508">
    <property type="term" value="P:proteolysis"/>
    <property type="evidence" value="ECO:0007669"/>
    <property type="project" value="InterPro"/>
</dbReference>
<dbReference type="GO" id="GO:0009432">
    <property type="term" value="P:SOS response"/>
    <property type="evidence" value="ECO:0007669"/>
    <property type="project" value="UniProtKB-UniRule"/>
</dbReference>
<dbReference type="CDD" id="cd06529">
    <property type="entry name" value="S24_LexA-like"/>
    <property type="match status" value="1"/>
</dbReference>
<dbReference type="FunFam" id="2.10.109.10:FF:000001">
    <property type="entry name" value="LexA repressor"/>
    <property type="match status" value="1"/>
</dbReference>
<dbReference type="Gene3D" id="2.10.109.10">
    <property type="entry name" value="Umud Fragment, subunit A"/>
    <property type="match status" value="1"/>
</dbReference>
<dbReference type="Gene3D" id="1.10.10.10">
    <property type="entry name" value="Winged helix-like DNA-binding domain superfamily/Winged helix DNA-binding domain"/>
    <property type="match status" value="1"/>
</dbReference>
<dbReference type="HAMAP" id="MF_00015">
    <property type="entry name" value="LexA"/>
    <property type="match status" value="1"/>
</dbReference>
<dbReference type="InterPro" id="IPR006200">
    <property type="entry name" value="LexA"/>
</dbReference>
<dbReference type="InterPro" id="IPR039418">
    <property type="entry name" value="LexA-like"/>
</dbReference>
<dbReference type="InterPro" id="IPR036286">
    <property type="entry name" value="LexA/Signal_pep-like_sf"/>
</dbReference>
<dbReference type="InterPro" id="IPR006199">
    <property type="entry name" value="LexA_DNA-bd_dom"/>
</dbReference>
<dbReference type="InterPro" id="IPR050077">
    <property type="entry name" value="LexA_repressor"/>
</dbReference>
<dbReference type="InterPro" id="IPR006197">
    <property type="entry name" value="Peptidase_S24_LexA"/>
</dbReference>
<dbReference type="InterPro" id="IPR015927">
    <property type="entry name" value="Peptidase_S24_S26A/B/C"/>
</dbReference>
<dbReference type="InterPro" id="IPR036388">
    <property type="entry name" value="WH-like_DNA-bd_sf"/>
</dbReference>
<dbReference type="InterPro" id="IPR036390">
    <property type="entry name" value="WH_DNA-bd_sf"/>
</dbReference>
<dbReference type="NCBIfam" id="TIGR00498">
    <property type="entry name" value="lexA"/>
    <property type="match status" value="1"/>
</dbReference>
<dbReference type="PANTHER" id="PTHR33516">
    <property type="entry name" value="LEXA REPRESSOR"/>
    <property type="match status" value="1"/>
</dbReference>
<dbReference type="PANTHER" id="PTHR33516:SF2">
    <property type="entry name" value="LEXA REPRESSOR-RELATED"/>
    <property type="match status" value="1"/>
</dbReference>
<dbReference type="Pfam" id="PF01726">
    <property type="entry name" value="LexA_DNA_bind"/>
    <property type="match status" value="1"/>
</dbReference>
<dbReference type="Pfam" id="PF00717">
    <property type="entry name" value="Peptidase_S24"/>
    <property type="match status" value="1"/>
</dbReference>
<dbReference type="PRINTS" id="PR00726">
    <property type="entry name" value="LEXASERPTASE"/>
</dbReference>
<dbReference type="SUPFAM" id="SSF51306">
    <property type="entry name" value="LexA/Signal peptidase"/>
    <property type="match status" value="1"/>
</dbReference>
<dbReference type="SUPFAM" id="SSF46785">
    <property type="entry name" value="Winged helix' DNA-binding domain"/>
    <property type="match status" value="1"/>
</dbReference>
<accession>Q2RT47</accession>
<reference key="1">
    <citation type="journal article" date="2011" name="Stand. Genomic Sci.">
        <title>Complete genome sequence of Rhodospirillum rubrum type strain (S1).</title>
        <authorList>
            <person name="Munk A.C."/>
            <person name="Copeland A."/>
            <person name="Lucas S."/>
            <person name="Lapidus A."/>
            <person name="Del Rio T.G."/>
            <person name="Barry K."/>
            <person name="Detter J.C."/>
            <person name="Hammon N."/>
            <person name="Israni S."/>
            <person name="Pitluck S."/>
            <person name="Brettin T."/>
            <person name="Bruce D."/>
            <person name="Han C."/>
            <person name="Tapia R."/>
            <person name="Gilna P."/>
            <person name="Schmutz J."/>
            <person name="Larimer F."/>
            <person name="Land M."/>
            <person name="Kyrpides N.C."/>
            <person name="Mavromatis K."/>
            <person name="Richardson P."/>
            <person name="Rohde M."/>
            <person name="Goeker M."/>
            <person name="Klenk H.P."/>
            <person name="Zhang Y."/>
            <person name="Roberts G.P."/>
            <person name="Reslewic S."/>
            <person name="Schwartz D.C."/>
        </authorList>
    </citation>
    <scope>NUCLEOTIDE SEQUENCE [LARGE SCALE GENOMIC DNA]</scope>
    <source>
        <strain>ATCC 11170 / ATH 1.1.1 / DSM 467 / LMG 4362 / NCIMB 8255 / S1</strain>
    </source>
</reference>
<protein>
    <recommendedName>
        <fullName evidence="1">LexA repressor</fullName>
        <ecNumber evidence="1">3.4.21.88</ecNumber>
    </recommendedName>
</protein>
<comment type="function">
    <text evidence="1">Represses a number of genes involved in the response to DNA damage (SOS response), including recA and lexA. In the presence of single-stranded DNA, RecA interacts with LexA causing an autocatalytic cleavage which disrupts the DNA-binding part of LexA, leading to derepression of the SOS regulon and eventually DNA repair.</text>
</comment>
<comment type="catalytic activity">
    <reaction evidence="1">
        <text>Hydrolysis of Ala-|-Gly bond in repressor LexA.</text>
        <dbReference type="EC" id="3.4.21.88"/>
    </reaction>
</comment>
<comment type="subunit">
    <text evidence="1">Homodimer.</text>
</comment>
<comment type="similarity">
    <text evidence="1">Belongs to the peptidase S24 family.</text>
</comment>
<proteinExistence type="inferred from homology"/>